<comment type="function">
    <text evidence="1">Probable transcription factor involved in plant development.</text>
</comment>
<comment type="subcellular location">
    <subcellularLocation>
        <location evidence="4">Nucleus</location>
    </subcellularLocation>
</comment>
<comment type="tissue specificity">
    <text evidence="3">Expressed in seedlings, roots, leaves and flowers.</text>
</comment>
<comment type="similarity">
    <text evidence="4">Belongs to the GRAS family.</text>
</comment>
<sequence length="483" mass="53538">MNYPYEDFLDLFFSTHTDPLATAASTSSNGYSLNDLDIDWDCDFRDVIESIMGDEGAMMEPESEAVPMLHDQEGLCNSASTGLSVADGVSFGEPKTDESKGLRLVHLLVAAADASTGANKSRELTRVILARLKDLVSPGDRTNMERLAAHFTNGLSKLLERDSVLCPQQHRDDVYDQADVISAFELLQNMSPYVNFGYLTATQAILEAVKYERRIHIVDYDINEGVQWASLMQALVSRNTGPSAQHLRITALSRATNGKKSVAAVQETGRRLTAFADSIGQPFSYQHCKLDTNAFSTSSLKLVRGEAVVINCMLHLPRFSHQTPSSVISFLSEAKTLNPKLVTLVHEEVGLMGNQGFLYRFMDLLHQFSAIFDSLEAGLSIANPARGFVERVFIGPWVANWLTRITANDAEVESFASWPQWLETNGFKPLEVSFTNRCQAKLLLSLFNDGFRVEELGQNGLVLGWKSRRLVSASFWASCQTNQ</sequence>
<accession>Q9SUF5</accession>
<keyword id="KW-0539">Nucleus</keyword>
<keyword id="KW-1185">Reference proteome</keyword>
<keyword id="KW-0804">Transcription</keyword>
<keyword id="KW-0805">Transcription regulation</keyword>
<proteinExistence type="evidence at transcript level"/>
<organism>
    <name type="scientific">Arabidopsis thaliana</name>
    <name type="common">Mouse-ear cress</name>
    <dbReference type="NCBI Taxonomy" id="3702"/>
    <lineage>
        <taxon>Eukaryota</taxon>
        <taxon>Viridiplantae</taxon>
        <taxon>Streptophyta</taxon>
        <taxon>Embryophyta</taxon>
        <taxon>Tracheophyta</taxon>
        <taxon>Spermatophyta</taxon>
        <taxon>Magnoliopsida</taxon>
        <taxon>eudicotyledons</taxon>
        <taxon>Gunneridae</taxon>
        <taxon>Pentapetalae</taxon>
        <taxon>rosids</taxon>
        <taxon>malvids</taxon>
        <taxon>Brassicales</taxon>
        <taxon>Brassicaceae</taxon>
        <taxon>Camelineae</taxon>
        <taxon>Arabidopsis</taxon>
    </lineage>
</organism>
<gene>
    <name type="primary">SCL26</name>
    <name type="ordered locus">At4g08250</name>
    <name type="ORF">T12G13.90</name>
</gene>
<evidence type="ECO:0000250" key="1"/>
<evidence type="ECO:0000255" key="2">
    <source>
        <dbReference type="PROSITE-ProRule" id="PRU01191"/>
    </source>
</evidence>
<evidence type="ECO:0000269" key="3">
    <source>
    </source>
</evidence>
<evidence type="ECO:0000305" key="4"/>
<protein>
    <recommendedName>
        <fullName>Scarecrow-like protein 26</fullName>
        <shortName>AtSCL26</shortName>
    </recommendedName>
    <alternativeName>
        <fullName>GRAS family protein 23</fullName>
        <shortName>AtGRAS-23</shortName>
    </alternativeName>
</protein>
<reference key="1">
    <citation type="journal article" date="1999" name="Nature">
        <title>Sequence and analysis of chromosome 4 of the plant Arabidopsis thaliana.</title>
        <authorList>
            <person name="Mayer K.F.X."/>
            <person name="Schueller C."/>
            <person name="Wambutt R."/>
            <person name="Murphy G."/>
            <person name="Volckaert G."/>
            <person name="Pohl T."/>
            <person name="Duesterhoeft A."/>
            <person name="Stiekema W."/>
            <person name="Entian K.-D."/>
            <person name="Terryn N."/>
            <person name="Harris B."/>
            <person name="Ansorge W."/>
            <person name="Brandt P."/>
            <person name="Grivell L.A."/>
            <person name="Rieger M."/>
            <person name="Weichselgartner M."/>
            <person name="de Simone V."/>
            <person name="Obermaier B."/>
            <person name="Mache R."/>
            <person name="Mueller M."/>
            <person name="Kreis M."/>
            <person name="Delseny M."/>
            <person name="Puigdomenech P."/>
            <person name="Watson M."/>
            <person name="Schmidtheini T."/>
            <person name="Reichert B."/>
            <person name="Portetelle D."/>
            <person name="Perez-Alonso M."/>
            <person name="Boutry M."/>
            <person name="Bancroft I."/>
            <person name="Vos P."/>
            <person name="Hoheisel J."/>
            <person name="Zimmermann W."/>
            <person name="Wedler H."/>
            <person name="Ridley P."/>
            <person name="Langham S.-A."/>
            <person name="McCullagh B."/>
            <person name="Bilham L."/>
            <person name="Robben J."/>
            <person name="van der Schueren J."/>
            <person name="Grymonprez B."/>
            <person name="Chuang Y.-J."/>
            <person name="Vandenbussche F."/>
            <person name="Braeken M."/>
            <person name="Weltjens I."/>
            <person name="Voet M."/>
            <person name="Bastiaens I."/>
            <person name="Aert R."/>
            <person name="Defoor E."/>
            <person name="Weitzenegger T."/>
            <person name="Bothe G."/>
            <person name="Ramsperger U."/>
            <person name="Hilbert H."/>
            <person name="Braun M."/>
            <person name="Holzer E."/>
            <person name="Brandt A."/>
            <person name="Peters S."/>
            <person name="van Staveren M."/>
            <person name="Dirkse W."/>
            <person name="Mooijman P."/>
            <person name="Klein Lankhorst R."/>
            <person name="Rose M."/>
            <person name="Hauf J."/>
            <person name="Koetter P."/>
            <person name="Berneiser S."/>
            <person name="Hempel S."/>
            <person name="Feldpausch M."/>
            <person name="Lamberth S."/>
            <person name="Van den Daele H."/>
            <person name="De Keyser A."/>
            <person name="Buysshaert C."/>
            <person name="Gielen J."/>
            <person name="Villarroel R."/>
            <person name="De Clercq R."/>
            <person name="van Montagu M."/>
            <person name="Rogers J."/>
            <person name="Cronin A."/>
            <person name="Quail M.A."/>
            <person name="Bray-Allen S."/>
            <person name="Clark L."/>
            <person name="Doggett J."/>
            <person name="Hall S."/>
            <person name="Kay M."/>
            <person name="Lennard N."/>
            <person name="McLay K."/>
            <person name="Mayes R."/>
            <person name="Pettett A."/>
            <person name="Rajandream M.A."/>
            <person name="Lyne M."/>
            <person name="Benes V."/>
            <person name="Rechmann S."/>
            <person name="Borkova D."/>
            <person name="Bloecker H."/>
            <person name="Scharfe M."/>
            <person name="Grimm M."/>
            <person name="Loehnert T.-H."/>
            <person name="Dose S."/>
            <person name="de Haan M."/>
            <person name="Maarse A.C."/>
            <person name="Schaefer M."/>
            <person name="Mueller-Auer S."/>
            <person name="Gabel C."/>
            <person name="Fuchs M."/>
            <person name="Fartmann B."/>
            <person name="Granderath K."/>
            <person name="Dauner D."/>
            <person name="Herzl A."/>
            <person name="Neumann S."/>
            <person name="Argiriou A."/>
            <person name="Vitale D."/>
            <person name="Liguori R."/>
            <person name="Piravandi E."/>
            <person name="Massenet O."/>
            <person name="Quigley F."/>
            <person name="Clabauld G."/>
            <person name="Muendlein A."/>
            <person name="Felber R."/>
            <person name="Schnabl S."/>
            <person name="Hiller R."/>
            <person name="Schmidt W."/>
            <person name="Lecharny A."/>
            <person name="Aubourg S."/>
            <person name="Chefdor F."/>
            <person name="Cooke R."/>
            <person name="Berger C."/>
            <person name="Monfort A."/>
            <person name="Casacuberta E."/>
            <person name="Gibbons T."/>
            <person name="Weber N."/>
            <person name="Vandenbol M."/>
            <person name="Bargues M."/>
            <person name="Terol J."/>
            <person name="Torres A."/>
            <person name="Perez-Perez A."/>
            <person name="Purnelle B."/>
            <person name="Bent E."/>
            <person name="Johnson S."/>
            <person name="Tacon D."/>
            <person name="Jesse T."/>
            <person name="Heijnen L."/>
            <person name="Schwarz S."/>
            <person name="Scholler P."/>
            <person name="Heber S."/>
            <person name="Francs P."/>
            <person name="Bielke C."/>
            <person name="Frishman D."/>
            <person name="Haase D."/>
            <person name="Lemcke K."/>
            <person name="Mewes H.-W."/>
            <person name="Stocker S."/>
            <person name="Zaccaria P."/>
            <person name="Bevan M."/>
            <person name="Wilson R.K."/>
            <person name="de la Bastide M."/>
            <person name="Habermann K."/>
            <person name="Parnell L."/>
            <person name="Dedhia N."/>
            <person name="Gnoj L."/>
            <person name="Schutz K."/>
            <person name="Huang E."/>
            <person name="Spiegel L."/>
            <person name="Sekhon M."/>
            <person name="Murray J."/>
            <person name="Sheet P."/>
            <person name="Cordes M."/>
            <person name="Abu-Threideh J."/>
            <person name="Stoneking T."/>
            <person name="Kalicki J."/>
            <person name="Graves T."/>
            <person name="Harmon G."/>
            <person name="Edwards J."/>
            <person name="Latreille P."/>
            <person name="Courtney L."/>
            <person name="Cloud J."/>
            <person name="Abbott A."/>
            <person name="Scott K."/>
            <person name="Johnson D."/>
            <person name="Minx P."/>
            <person name="Bentley D."/>
            <person name="Fulton B."/>
            <person name="Miller N."/>
            <person name="Greco T."/>
            <person name="Kemp K."/>
            <person name="Kramer J."/>
            <person name="Fulton L."/>
            <person name="Mardis E."/>
            <person name="Dante M."/>
            <person name="Pepin K."/>
            <person name="Hillier L.W."/>
            <person name="Nelson J."/>
            <person name="Spieth J."/>
            <person name="Ryan E."/>
            <person name="Andrews S."/>
            <person name="Geisel C."/>
            <person name="Layman D."/>
            <person name="Du H."/>
            <person name="Ali J."/>
            <person name="Berghoff A."/>
            <person name="Jones K."/>
            <person name="Drone K."/>
            <person name="Cotton M."/>
            <person name="Joshu C."/>
            <person name="Antonoiu B."/>
            <person name="Zidanic M."/>
            <person name="Strong C."/>
            <person name="Sun H."/>
            <person name="Lamar B."/>
            <person name="Yordan C."/>
            <person name="Ma P."/>
            <person name="Zhong J."/>
            <person name="Preston R."/>
            <person name="Vil D."/>
            <person name="Shekher M."/>
            <person name="Matero A."/>
            <person name="Shah R."/>
            <person name="Swaby I.K."/>
            <person name="O'Shaughnessy A."/>
            <person name="Rodriguez M."/>
            <person name="Hoffman J."/>
            <person name="Till S."/>
            <person name="Granat S."/>
            <person name="Shohdy N."/>
            <person name="Hasegawa A."/>
            <person name="Hameed A."/>
            <person name="Lodhi M."/>
            <person name="Johnson A."/>
            <person name="Chen E."/>
            <person name="Marra M.A."/>
            <person name="Martienssen R."/>
            <person name="McCombie W.R."/>
        </authorList>
    </citation>
    <scope>NUCLEOTIDE SEQUENCE [LARGE SCALE GENOMIC DNA]</scope>
    <source>
        <strain>cv. Columbia</strain>
    </source>
</reference>
<reference key="2">
    <citation type="journal article" date="2017" name="Plant J.">
        <title>Araport11: a complete reannotation of the Arabidopsis thaliana reference genome.</title>
        <authorList>
            <person name="Cheng C.Y."/>
            <person name="Krishnakumar V."/>
            <person name="Chan A.P."/>
            <person name="Thibaud-Nissen F."/>
            <person name="Schobel S."/>
            <person name="Town C.D."/>
        </authorList>
    </citation>
    <scope>GENOME REANNOTATION</scope>
    <source>
        <strain>cv. Columbia</strain>
    </source>
</reference>
<reference key="3">
    <citation type="submission" date="2004-09" db="EMBL/GenBank/DDBJ databases">
        <authorList>
            <consortium name="Center for eukaryotic structural genomics (CESG)"/>
        </authorList>
    </citation>
    <scope>NUCLEOTIDE SEQUENCE [LARGE SCALE MRNA] OF 2-483</scope>
    <source>
        <strain>cv. Columbia</strain>
    </source>
</reference>
<reference key="4">
    <citation type="journal article" date="2004" name="Plant Mol. Biol.">
        <title>Genome-wide analysis of the GRAS gene family in rice and Arabidopsis.</title>
        <authorList>
            <person name="Tian C."/>
            <person name="Wan P."/>
            <person name="Sun S."/>
            <person name="Li J."/>
            <person name="Chen M."/>
        </authorList>
    </citation>
    <scope>GENE FAMILY</scope>
</reference>
<reference key="5">
    <citation type="journal article" date="2008" name="Plant Mol. Biol.">
        <title>Large-scale analysis of the GRAS gene family in Arabidopsis thaliana.</title>
        <authorList>
            <person name="Lee M.-H."/>
            <person name="Kim B."/>
            <person name="Song S.-K."/>
            <person name="Heo J.-O."/>
            <person name="Yu N.-I."/>
            <person name="Lee S.A."/>
            <person name="Kim M."/>
            <person name="Kim D.G."/>
            <person name="Sohn S.O."/>
            <person name="Lim C.E."/>
            <person name="Chang K.S."/>
            <person name="Lee M.M."/>
            <person name="Lim J."/>
        </authorList>
    </citation>
    <scope>GENE FAMILY</scope>
    <scope>TISSUE SPECIFICITY</scope>
</reference>
<name>SCL26_ARATH</name>
<dbReference type="EMBL" id="AL080252">
    <property type="protein sequence ID" value="CAB45795.1"/>
    <property type="molecule type" value="Genomic_DNA"/>
</dbReference>
<dbReference type="EMBL" id="AL161510">
    <property type="protein sequence ID" value="CAB81161.1"/>
    <property type="molecule type" value="Genomic_DNA"/>
</dbReference>
<dbReference type="EMBL" id="CP002687">
    <property type="protein sequence ID" value="AEE82614.1"/>
    <property type="molecule type" value="Genomic_DNA"/>
</dbReference>
<dbReference type="EMBL" id="BT011797">
    <property type="status" value="NOT_ANNOTATED_CDS"/>
    <property type="molecule type" value="mRNA"/>
</dbReference>
<dbReference type="PIR" id="T10552">
    <property type="entry name" value="T10552"/>
</dbReference>
<dbReference type="RefSeq" id="NP_192565.1">
    <property type="nucleotide sequence ID" value="NM_116894.1"/>
</dbReference>
<dbReference type="SMR" id="Q9SUF5"/>
<dbReference type="BioGRID" id="11675">
    <property type="interactions" value="3"/>
</dbReference>
<dbReference type="FunCoup" id="Q9SUF5">
    <property type="interactions" value="40"/>
</dbReference>
<dbReference type="STRING" id="3702.Q9SUF5"/>
<dbReference type="PaxDb" id="3702-AT4G08250.1"/>
<dbReference type="DNASU" id="826375"/>
<dbReference type="EnsemblPlants" id="AT4G08250.1">
    <property type="protein sequence ID" value="AT4G08250.1"/>
    <property type="gene ID" value="AT4G08250"/>
</dbReference>
<dbReference type="GeneID" id="826375"/>
<dbReference type="Gramene" id="AT4G08250.1">
    <property type="protein sequence ID" value="AT4G08250.1"/>
    <property type="gene ID" value="AT4G08250"/>
</dbReference>
<dbReference type="KEGG" id="ath:AT4G08250"/>
<dbReference type="Araport" id="AT4G08250"/>
<dbReference type="TAIR" id="AT4G08250"/>
<dbReference type="eggNOG" id="ENOG502R0MM">
    <property type="taxonomic scope" value="Eukaryota"/>
</dbReference>
<dbReference type="HOGENOM" id="CLU_011924_0_2_1"/>
<dbReference type="InParanoid" id="Q9SUF5"/>
<dbReference type="OMA" id="IMENDEP"/>
<dbReference type="PhylomeDB" id="Q9SUF5"/>
<dbReference type="PRO" id="PR:Q9SUF5"/>
<dbReference type="Proteomes" id="UP000006548">
    <property type="component" value="Chromosome 4"/>
</dbReference>
<dbReference type="ExpressionAtlas" id="Q9SUF5">
    <property type="expression patterns" value="baseline and differential"/>
</dbReference>
<dbReference type="GO" id="GO:0005634">
    <property type="term" value="C:nucleus"/>
    <property type="evidence" value="ECO:0007669"/>
    <property type="project" value="UniProtKB-SubCell"/>
</dbReference>
<dbReference type="GO" id="GO:0003700">
    <property type="term" value="F:DNA-binding transcription factor activity"/>
    <property type="evidence" value="ECO:0000250"/>
    <property type="project" value="TAIR"/>
</dbReference>
<dbReference type="GO" id="GO:0006355">
    <property type="term" value="P:regulation of DNA-templated transcription"/>
    <property type="evidence" value="ECO:0000304"/>
    <property type="project" value="TAIR"/>
</dbReference>
<dbReference type="InterPro" id="IPR005202">
    <property type="entry name" value="TF_GRAS"/>
</dbReference>
<dbReference type="PANTHER" id="PTHR31636">
    <property type="entry name" value="OSJNBA0084A10.13 PROTEIN-RELATED"/>
    <property type="match status" value="1"/>
</dbReference>
<dbReference type="Pfam" id="PF03514">
    <property type="entry name" value="GRAS"/>
    <property type="match status" value="1"/>
</dbReference>
<dbReference type="PROSITE" id="PS50985">
    <property type="entry name" value="GRAS"/>
    <property type="match status" value="1"/>
</dbReference>
<feature type="chain" id="PRO_0000350863" description="Scarecrow-like protein 26">
    <location>
        <begin position="1"/>
        <end position="483"/>
    </location>
</feature>
<feature type="domain" description="GRAS" evidence="2">
    <location>
        <begin position="95"/>
        <end position="477"/>
    </location>
</feature>
<feature type="region of interest" description="Leucine repeat I (LRI)" evidence="2">
    <location>
        <begin position="102"/>
        <end position="165"/>
    </location>
</feature>
<feature type="region of interest" description="VHIID" evidence="2">
    <location>
        <begin position="184"/>
        <end position="251"/>
    </location>
</feature>
<feature type="region of interest" description="Leucine repeat II (LRII)" evidence="2">
    <location>
        <begin position="267"/>
        <end position="299"/>
    </location>
</feature>
<feature type="region of interest" description="PFYRE" evidence="2">
    <location>
        <begin position="308"/>
        <end position="400"/>
    </location>
</feature>
<feature type="region of interest" description="SAW" evidence="2">
    <location>
        <begin position="403"/>
        <end position="477"/>
    </location>
</feature>
<feature type="short sequence motif" description="VHIID" evidence="2">
    <location>
        <begin position="215"/>
        <end position="219"/>
    </location>
</feature>
<feature type="sequence conflict" description="In Ref. 3; BT011797." evidence="4" ref="3">
    <original>V</original>
    <variation>F</variation>
    <location>
        <position position="342"/>
    </location>
</feature>